<dbReference type="EMBL" id="CP000304">
    <property type="protein sequence ID" value="ABP79116.1"/>
    <property type="molecule type" value="Genomic_DNA"/>
</dbReference>
<dbReference type="RefSeq" id="WP_011912597.1">
    <property type="nucleotide sequence ID" value="NC_009434.1"/>
</dbReference>
<dbReference type="SMR" id="A4VJG5"/>
<dbReference type="KEGG" id="psa:PST_1425"/>
<dbReference type="eggNOG" id="COG0850">
    <property type="taxonomic scope" value="Bacteria"/>
</dbReference>
<dbReference type="HOGENOM" id="CLU_067812_0_1_6"/>
<dbReference type="Proteomes" id="UP000000233">
    <property type="component" value="Chromosome"/>
</dbReference>
<dbReference type="GO" id="GO:0000902">
    <property type="term" value="P:cell morphogenesis"/>
    <property type="evidence" value="ECO:0007669"/>
    <property type="project" value="InterPro"/>
</dbReference>
<dbReference type="GO" id="GO:0000917">
    <property type="term" value="P:division septum assembly"/>
    <property type="evidence" value="ECO:0007669"/>
    <property type="project" value="UniProtKB-KW"/>
</dbReference>
<dbReference type="GO" id="GO:0051302">
    <property type="term" value="P:regulation of cell division"/>
    <property type="evidence" value="ECO:0007669"/>
    <property type="project" value="InterPro"/>
</dbReference>
<dbReference type="GO" id="GO:1901891">
    <property type="term" value="P:regulation of cell septum assembly"/>
    <property type="evidence" value="ECO:0007669"/>
    <property type="project" value="InterPro"/>
</dbReference>
<dbReference type="Gene3D" id="2.160.20.70">
    <property type="match status" value="1"/>
</dbReference>
<dbReference type="Gene3D" id="3.30.70.260">
    <property type="match status" value="1"/>
</dbReference>
<dbReference type="HAMAP" id="MF_00267">
    <property type="entry name" value="MinC"/>
    <property type="match status" value="1"/>
</dbReference>
<dbReference type="InterPro" id="IPR016098">
    <property type="entry name" value="CAP/MinC_C"/>
</dbReference>
<dbReference type="InterPro" id="IPR013033">
    <property type="entry name" value="MinC"/>
</dbReference>
<dbReference type="InterPro" id="IPR036145">
    <property type="entry name" value="MinC_C_sf"/>
</dbReference>
<dbReference type="InterPro" id="IPR007874">
    <property type="entry name" value="MinC_N"/>
</dbReference>
<dbReference type="InterPro" id="IPR005526">
    <property type="entry name" value="Septum_form_inhib_MinC_C"/>
</dbReference>
<dbReference type="NCBIfam" id="TIGR01222">
    <property type="entry name" value="minC"/>
    <property type="match status" value="1"/>
</dbReference>
<dbReference type="PANTHER" id="PTHR34108">
    <property type="entry name" value="SEPTUM SITE-DETERMINING PROTEIN MINC"/>
    <property type="match status" value="1"/>
</dbReference>
<dbReference type="PANTHER" id="PTHR34108:SF1">
    <property type="entry name" value="SEPTUM SITE-DETERMINING PROTEIN MINC"/>
    <property type="match status" value="1"/>
</dbReference>
<dbReference type="Pfam" id="PF03775">
    <property type="entry name" value="MinC_C"/>
    <property type="match status" value="1"/>
</dbReference>
<dbReference type="Pfam" id="PF05209">
    <property type="entry name" value="MinC_N"/>
    <property type="match status" value="1"/>
</dbReference>
<dbReference type="SUPFAM" id="SSF63848">
    <property type="entry name" value="Cell-division inhibitor MinC, C-terminal domain"/>
    <property type="match status" value="1"/>
</dbReference>
<comment type="function">
    <text evidence="1">Cell division inhibitor that blocks the formation of polar Z ring septums. Rapidly oscillates between the poles of the cell to destabilize FtsZ filaments that have formed before they mature into polar Z rings. Prevents FtsZ polymerization.</text>
</comment>
<comment type="subunit">
    <text evidence="1">Interacts with MinD and FtsZ.</text>
</comment>
<comment type="similarity">
    <text evidence="1">Belongs to the MinC family.</text>
</comment>
<gene>
    <name evidence="1" type="primary">minC</name>
    <name type="ordered locus">PST_1425</name>
</gene>
<sequence>MSQADLPEPAPAFQLKGSMLAITVLELAHNDIERLDEQLAAKVEQAPDFFNNTPLVLALDKLPEASREIDIQALVALCRKHRLRTLALRASDAAHLEAAAALDLPVLPPSGARERKVDPSSKTPAKPAEPTYRPTRVVSTPIRGGQQVYAQGGDLVVLAPVSPGAELLADGNIHVYGPLRGRALAGIKGDTTARIFCRQLAAEMVSIAGQYKVAEDLRRDPLWAEAVQVSLSGDVLNITRL</sequence>
<reference key="1">
    <citation type="journal article" date="2008" name="Proc. Natl. Acad. Sci. U.S.A.">
        <title>Nitrogen fixation island and rhizosphere competence traits in the genome of root-associated Pseudomonas stutzeri A1501.</title>
        <authorList>
            <person name="Yan Y."/>
            <person name="Yang J."/>
            <person name="Dou Y."/>
            <person name="Chen M."/>
            <person name="Ping S."/>
            <person name="Peng J."/>
            <person name="Lu W."/>
            <person name="Zhang W."/>
            <person name="Yao Z."/>
            <person name="Li H."/>
            <person name="Liu W."/>
            <person name="He S."/>
            <person name="Geng L."/>
            <person name="Zhang X."/>
            <person name="Yang F."/>
            <person name="Yu H."/>
            <person name="Zhan Y."/>
            <person name="Li D."/>
            <person name="Lin Z."/>
            <person name="Wang Y."/>
            <person name="Elmerich C."/>
            <person name="Lin M."/>
            <person name="Jin Q."/>
        </authorList>
    </citation>
    <scope>NUCLEOTIDE SEQUENCE [LARGE SCALE GENOMIC DNA]</scope>
    <source>
        <strain>A1501</strain>
    </source>
</reference>
<accession>A4VJG5</accession>
<evidence type="ECO:0000255" key="1">
    <source>
        <dbReference type="HAMAP-Rule" id="MF_00267"/>
    </source>
</evidence>
<evidence type="ECO:0000256" key="2">
    <source>
        <dbReference type="SAM" id="MobiDB-lite"/>
    </source>
</evidence>
<protein>
    <recommendedName>
        <fullName evidence="1">Probable septum site-determining protein MinC</fullName>
    </recommendedName>
</protein>
<keyword id="KW-0131">Cell cycle</keyword>
<keyword id="KW-0132">Cell division</keyword>
<keyword id="KW-1185">Reference proteome</keyword>
<keyword id="KW-0717">Septation</keyword>
<proteinExistence type="inferred from homology"/>
<name>MINC_STUS1</name>
<organism>
    <name type="scientific">Stutzerimonas stutzeri (strain A1501)</name>
    <name type="common">Pseudomonas stutzeri</name>
    <dbReference type="NCBI Taxonomy" id="379731"/>
    <lineage>
        <taxon>Bacteria</taxon>
        <taxon>Pseudomonadati</taxon>
        <taxon>Pseudomonadota</taxon>
        <taxon>Gammaproteobacteria</taxon>
        <taxon>Pseudomonadales</taxon>
        <taxon>Pseudomonadaceae</taxon>
        <taxon>Stutzerimonas</taxon>
    </lineage>
</organism>
<feature type="chain" id="PRO_1000047848" description="Probable septum site-determining protein MinC">
    <location>
        <begin position="1"/>
        <end position="241"/>
    </location>
</feature>
<feature type="region of interest" description="Disordered" evidence="2">
    <location>
        <begin position="109"/>
        <end position="135"/>
    </location>
</feature>